<dbReference type="EMBL" id="CP000812">
    <property type="protein sequence ID" value="ABV32886.1"/>
    <property type="molecule type" value="Genomic_DNA"/>
</dbReference>
<dbReference type="RefSeq" id="WP_012002367.1">
    <property type="nucleotide sequence ID" value="NZ_BSDV01000001.1"/>
</dbReference>
<dbReference type="SMR" id="A8F402"/>
<dbReference type="STRING" id="416591.Tlet_0318"/>
<dbReference type="KEGG" id="tle:Tlet_0318"/>
<dbReference type="eggNOG" id="COG0234">
    <property type="taxonomic scope" value="Bacteria"/>
</dbReference>
<dbReference type="HOGENOM" id="CLU_132825_2_0_0"/>
<dbReference type="OrthoDB" id="9806791at2"/>
<dbReference type="Proteomes" id="UP000002016">
    <property type="component" value="Chromosome"/>
</dbReference>
<dbReference type="GO" id="GO:0005737">
    <property type="term" value="C:cytoplasm"/>
    <property type="evidence" value="ECO:0007669"/>
    <property type="project" value="UniProtKB-SubCell"/>
</dbReference>
<dbReference type="GO" id="GO:0005524">
    <property type="term" value="F:ATP binding"/>
    <property type="evidence" value="ECO:0007669"/>
    <property type="project" value="InterPro"/>
</dbReference>
<dbReference type="GO" id="GO:0046872">
    <property type="term" value="F:metal ion binding"/>
    <property type="evidence" value="ECO:0007669"/>
    <property type="project" value="TreeGrafter"/>
</dbReference>
<dbReference type="GO" id="GO:0044183">
    <property type="term" value="F:protein folding chaperone"/>
    <property type="evidence" value="ECO:0007669"/>
    <property type="project" value="InterPro"/>
</dbReference>
<dbReference type="GO" id="GO:0051087">
    <property type="term" value="F:protein-folding chaperone binding"/>
    <property type="evidence" value="ECO:0007669"/>
    <property type="project" value="TreeGrafter"/>
</dbReference>
<dbReference type="GO" id="GO:0051082">
    <property type="term" value="F:unfolded protein binding"/>
    <property type="evidence" value="ECO:0007669"/>
    <property type="project" value="TreeGrafter"/>
</dbReference>
<dbReference type="GO" id="GO:0051085">
    <property type="term" value="P:chaperone cofactor-dependent protein refolding"/>
    <property type="evidence" value="ECO:0007669"/>
    <property type="project" value="TreeGrafter"/>
</dbReference>
<dbReference type="CDD" id="cd00320">
    <property type="entry name" value="cpn10"/>
    <property type="match status" value="1"/>
</dbReference>
<dbReference type="FunFam" id="2.30.33.40:FF:000001">
    <property type="entry name" value="10 kDa chaperonin"/>
    <property type="match status" value="1"/>
</dbReference>
<dbReference type="Gene3D" id="2.30.33.40">
    <property type="entry name" value="GroES chaperonin"/>
    <property type="match status" value="1"/>
</dbReference>
<dbReference type="HAMAP" id="MF_00580">
    <property type="entry name" value="CH10"/>
    <property type="match status" value="1"/>
</dbReference>
<dbReference type="InterPro" id="IPR020818">
    <property type="entry name" value="Chaperonin_GroES"/>
</dbReference>
<dbReference type="InterPro" id="IPR037124">
    <property type="entry name" value="Chaperonin_GroES_sf"/>
</dbReference>
<dbReference type="InterPro" id="IPR018369">
    <property type="entry name" value="Chaprnonin_Cpn10_CS"/>
</dbReference>
<dbReference type="InterPro" id="IPR011032">
    <property type="entry name" value="GroES-like_sf"/>
</dbReference>
<dbReference type="NCBIfam" id="NF001531">
    <property type="entry name" value="PRK00364.2-2"/>
    <property type="match status" value="1"/>
</dbReference>
<dbReference type="NCBIfam" id="NF011106">
    <property type="entry name" value="PRK14533.1"/>
    <property type="match status" value="1"/>
</dbReference>
<dbReference type="PANTHER" id="PTHR10772">
    <property type="entry name" value="10 KDA HEAT SHOCK PROTEIN"/>
    <property type="match status" value="1"/>
</dbReference>
<dbReference type="PANTHER" id="PTHR10772:SF63">
    <property type="entry name" value="20 KDA CHAPERONIN, CHLOROPLASTIC"/>
    <property type="match status" value="1"/>
</dbReference>
<dbReference type="Pfam" id="PF00166">
    <property type="entry name" value="Cpn10"/>
    <property type="match status" value="1"/>
</dbReference>
<dbReference type="PRINTS" id="PR00297">
    <property type="entry name" value="CHAPERONIN10"/>
</dbReference>
<dbReference type="SMART" id="SM00883">
    <property type="entry name" value="Cpn10"/>
    <property type="match status" value="1"/>
</dbReference>
<dbReference type="SUPFAM" id="SSF50129">
    <property type="entry name" value="GroES-like"/>
    <property type="match status" value="1"/>
</dbReference>
<dbReference type="PROSITE" id="PS00681">
    <property type="entry name" value="CHAPERONINS_CPN10"/>
    <property type="match status" value="1"/>
</dbReference>
<gene>
    <name evidence="1" type="primary">groES</name>
    <name evidence="1" type="synonym">groS</name>
    <name type="ordered locus">Tlet_0318</name>
</gene>
<protein>
    <recommendedName>
        <fullName evidence="1">Co-chaperonin GroES</fullName>
    </recommendedName>
    <alternativeName>
        <fullName evidence="1">10 kDa chaperonin</fullName>
    </alternativeName>
    <alternativeName>
        <fullName evidence="1">Chaperonin-10</fullName>
        <shortName evidence="1">Cpn10</shortName>
    </alternativeName>
</protein>
<name>CH10_PSELT</name>
<comment type="function">
    <text evidence="1">Together with the chaperonin GroEL, plays an essential role in assisting protein folding. The GroEL-GroES system forms a nano-cage that allows encapsulation of the non-native substrate proteins and provides a physical environment optimized to promote and accelerate protein folding. GroES binds to the apical surface of the GroEL ring, thereby capping the opening of the GroEL channel.</text>
</comment>
<comment type="subunit">
    <text evidence="1">Heptamer of 7 subunits arranged in a ring. Interacts with the chaperonin GroEL.</text>
</comment>
<comment type="subcellular location">
    <subcellularLocation>
        <location evidence="1">Cytoplasm</location>
    </subcellularLocation>
</comment>
<comment type="similarity">
    <text evidence="1">Belongs to the GroES chaperonin family.</text>
</comment>
<organism>
    <name type="scientific">Pseudothermotoga lettingae (strain ATCC BAA-301 / DSM 14385 / NBRC 107922 / TMO)</name>
    <name type="common">Thermotoga lettingae</name>
    <dbReference type="NCBI Taxonomy" id="416591"/>
    <lineage>
        <taxon>Bacteria</taxon>
        <taxon>Thermotogati</taxon>
        <taxon>Thermotogota</taxon>
        <taxon>Thermotogae</taxon>
        <taxon>Thermotogales</taxon>
        <taxon>Thermotogaceae</taxon>
        <taxon>Pseudothermotoga</taxon>
    </lineage>
</organism>
<accession>A8F402</accession>
<evidence type="ECO:0000255" key="1">
    <source>
        <dbReference type="HAMAP-Rule" id="MF_00580"/>
    </source>
</evidence>
<keyword id="KW-0143">Chaperone</keyword>
<keyword id="KW-0963">Cytoplasm</keyword>
<keyword id="KW-1185">Reference proteome</keyword>
<sequence length="89" mass="9852">MKVTPLGERLLIKPLKEEKKTEGGIVLPDSAKEKPMKAEVVAVGEKVENIDVKVGDRVIFSKYAGTEIKIDDVDYIIIDANDILAKIEE</sequence>
<reference key="1">
    <citation type="submission" date="2007-08" db="EMBL/GenBank/DDBJ databases">
        <title>Complete sequence of Thermotoga lettingae TMO.</title>
        <authorList>
            <consortium name="US DOE Joint Genome Institute"/>
            <person name="Copeland A."/>
            <person name="Lucas S."/>
            <person name="Lapidus A."/>
            <person name="Barry K."/>
            <person name="Glavina del Rio T."/>
            <person name="Dalin E."/>
            <person name="Tice H."/>
            <person name="Pitluck S."/>
            <person name="Foster B."/>
            <person name="Bruce D."/>
            <person name="Schmutz J."/>
            <person name="Larimer F."/>
            <person name="Land M."/>
            <person name="Hauser L."/>
            <person name="Kyrpides N."/>
            <person name="Mikhailova N."/>
            <person name="Nelson K."/>
            <person name="Gogarten J.P."/>
            <person name="Noll K."/>
            <person name="Richardson P."/>
        </authorList>
    </citation>
    <scope>NUCLEOTIDE SEQUENCE [LARGE SCALE GENOMIC DNA]</scope>
    <source>
        <strain>ATCC BAA-301 / DSM 14385 / NBRC 107922 / TMO</strain>
    </source>
</reference>
<proteinExistence type="inferred from homology"/>
<feature type="chain" id="PRO_1000061193" description="Co-chaperonin GroES">
    <location>
        <begin position="1"/>
        <end position="89"/>
    </location>
</feature>